<keyword id="KW-0002">3D-structure</keyword>
<keyword id="KW-0025">Alternative splicing</keyword>
<keyword id="KW-0984">Congenital hypothyroidism</keyword>
<keyword id="KW-0963">Cytoplasm</keyword>
<keyword id="KW-0225">Disease variant</keyword>
<keyword id="KW-0238">DNA-binding</keyword>
<keyword id="KW-0479">Metal-binding</keyword>
<keyword id="KW-0539">Nucleus</keyword>
<keyword id="KW-1267">Proteomics identification</keyword>
<keyword id="KW-0675">Receptor</keyword>
<keyword id="KW-1185">Reference proteome</keyword>
<keyword id="KW-0804">Transcription</keyword>
<keyword id="KW-0805">Transcription regulation</keyword>
<keyword id="KW-0862">Zinc</keyword>
<keyword id="KW-0863">Zinc-finger</keyword>
<gene>
    <name type="primary">THRA</name>
    <name type="synonym">EAR7</name>
    <name type="synonym">ERBA1</name>
    <name type="synonym">NR1A1</name>
    <name type="synonym">THRA1</name>
    <name type="synonym">THRA2</name>
</gene>
<name>THA_HUMAN</name>
<organism>
    <name type="scientific">Homo sapiens</name>
    <name type="common">Human</name>
    <dbReference type="NCBI Taxonomy" id="9606"/>
    <lineage>
        <taxon>Eukaryota</taxon>
        <taxon>Metazoa</taxon>
        <taxon>Chordata</taxon>
        <taxon>Craniata</taxon>
        <taxon>Vertebrata</taxon>
        <taxon>Euteleostomi</taxon>
        <taxon>Mammalia</taxon>
        <taxon>Eutheria</taxon>
        <taxon>Euarchontoglires</taxon>
        <taxon>Primates</taxon>
        <taxon>Haplorrhini</taxon>
        <taxon>Catarrhini</taxon>
        <taxon>Hominidae</taxon>
        <taxon>Homo</taxon>
    </lineage>
</organism>
<evidence type="ECO:0000250" key="1">
    <source>
        <dbReference type="UniProtKB" id="P10828"/>
    </source>
</evidence>
<evidence type="ECO:0000250" key="2">
    <source>
        <dbReference type="UniProtKB" id="P63058"/>
    </source>
</evidence>
<evidence type="ECO:0000255" key="3">
    <source>
        <dbReference type="PROSITE-ProRule" id="PRU00407"/>
    </source>
</evidence>
<evidence type="ECO:0000255" key="4">
    <source>
        <dbReference type="PROSITE-ProRule" id="PRU01189"/>
    </source>
</evidence>
<evidence type="ECO:0000256" key="5">
    <source>
        <dbReference type="SAM" id="MobiDB-lite"/>
    </source>
</evidence>
<evidence type="ECO:0000269" key="6">
    <source>
    </source>
</evidence>
<evidence type="ECO:0000269" key="7">
    <source>
    </source>
</evidence>
<evidence type="ECO:0000269" key="8">
    <source>
    </source>
</evidence>
<evidence type="ECO:0000269" key="9">
    <source>
    </source>
</evidence>
<evidence type="ECO:0000269" key="10">
    <source>
    </source>
</evidence>
<evidence type="ECO:0000269" key="11">
    <source>
    </source>
</evidence>
<evidence type="ECO:0000269" key="12">
    <source>
    </source>
</evidence>
<evidence type="ECO:0000269" key="13">
    <source>
    </source>
</evidence>
<evidence type="ECO:0000269" key="14">
    <source>
    </source>
</evidence>
<evidence type="ECO:0000269" key="15">
    <source>
    </source>
</evidence>
<evidence type="ECO:0000269" key="16">
    <source>
    </source>
</evidence>
<evidence type="ECO:0000269" key="17">
    <source>
    </source>
</evidence>
<evidence type="ECO:0000269" key="18">
    <source>
    </source>
</evidence>
<evidence type="ECO:0000269" key="19">
    <source>
    </source>
</evidence>
<evidence type="ECO:0000269" key="20">
    <source>
    </source>
</evidence>
<evidence type="ECO:0000303" key="21">
    <source>
    </source>
</evidence>
<evidence type="ECO:0000303" key="22">
    <source>
    </source>
</evidence>
<evidence type="ECO:0000303" key="23">
    <source>
    </source>
</evidence>
<evidence type="ECO:0000303" key="24">
    <source ref="10"/>
</evidence>
<evidence type="ECO:0000305" key="25"/>
<evidence type="ECO:0000305" key="26">
    <source>
    </source>
</evidence>
<evidence type="ECO:0007744" key="27">
    <source>
        <dbReference type="PDB" id="2H77"/>
    </source>
</evidence>
<evidence type="ECO:0007744" key="28">
    <source>
        <dbReference type="PDB" id="2H79"/>
    </source>
</evidence>
<evidence type="ECO:0007829" key="29">
    <source>
        <dbReference type="PDB" id="2H79"/>
    </source>
</evidence>
<evidence type="ECO:0007829" key="30">
    <source>
        <dbReference type="PDB" id="3ILZ"/>
    </source>
</evidence>
<proteinExistence type="evidence at protein level"/>
<feature type="chain" id="PRO_0000053424" description="Thyroid hormone receptor alpha">
    <location>
        <begin position="1"/>
        <end position="490"/>
    </location>
</feature>
<feature type="domain" description="NR LBD" evidence="4">
    <location>
        <begin position="163"/>
        <end position="407"/>
    </location>
</feature>
<feature type="DNA-binding region" description="Nuclear receptor" evidence="3">
    <location>
        <begin position="53"/>
        <end position="127"/>
    </location>
</feature>
<feature type="zinc finger region" description="NR C4-type" evidence="3">
    <location>
        <begin position="53"/>
        <end position="73"/>
    </location>
</feature>
<feature type="zinc finger region" description="NR C4-type" evidence="3">
    <location>
        <begin position="91"/>
        <end position="115"/>
    </location>
</feature>
<feature type="region of interest" description="Modulating">
    <location>
        <begin position="1"/>
        <end position="52"/>
    </location>
</feature>
<feature type="region of interest" description="Disordered" evidence="5">
    <location>
        <begin position="1"/>
        <end position="32"/>
    </location>
</feature>
<feature type="region of interest" description="Disordered" evidence="5">
    <location>
        <begin position="457"/>
        <end position="490"/>
    </location>
</feature>
<feature type="binding site" evidence="1">
    <location>
        <position position="53"/>
    </location>
    <ligand>
        <name>Zn(2+)</name>
        <dbReference type="ChEBI" id="CHEBI:29105"/>
        <label>1</label>
    </ligand>
</feature>
<feature type="binding site" evidence="1">
    <location>
        <position position="56"/>
    </location>
    <ligand>
        <name>Zn(2+)</name>
        <dbReference type="ChEBI" id="CHEBI:29105"/>
        <label>1</label>
    </ligand>
</feature>
<feature type="binding site" evidence="1">
    <location>
        <position position="70"/>
    </location>
    <ligand>
        <name>Zn(2+)</name>
        <dbReference type="ChEBI" id="CHEBI:29105"/>
        <label>1</label>
    </ligand>
</feature>
<feature type="binding site" evidence="1">
    <location>
        <position position="73"/>
    </location>
    <ligand>
        <name>Zn(2+)</name>
        <dbReference type="ChEBI" id="CHEBI:29105"/>
        <label>1</label>
    </ligand>
</feature>
<feature type="binding site" evidence="1">
    <location>
        <position position="91"/>
    </location>
    <ligand>
        <name>Zn(2+)</name>
        <dbReference type="ChEBI" id="CHEBI:29105"/>
        <label>2</label>
    </ligand>
</feature>
<feature type="binding site" evidence="1">
    <location>
        <position position="97"/>
    </location>
    <ligand>
        <name>Zn(2+)</name>
        <dbReference type="ChEBI" id="CHEBI:29105"/>
        <label>2</label>
    </ligand>
</feature>
<feature type="binding site" evidence="1">
    <location>
        <position position="107"/>
    </location>
    <ligand>
        <name>Zn(2+)</name>
        <dbReference type="ChEBI" id="CHEBI:29105"/>
        <label>2</label>
    </ligand>
</feature>
<feature type="binding site" evidence="1">
    <location>
        <position position="110"/>
    </location>
    <ligand>
        <name>Zn(2+)</name>
        <dbReference type="ChEBI" id="CHEBI:29105"/>
        <label>2</label>
    </ligand>
</feature>
<feature type="binding site" evidence="9 27 28">
    <location>
        <position position="228"/>
    </location>
    <ligand>
        <name>3,3',5-triiodo-L-thyronine</name>
        <dbReference type="ChEBI" id="CHEBI:533015"/>
    </ligand>
</feature>
<feature type="binding site" evidence="9 28">
    <location>
        <position position="277"/>
    </location>
    <ligand>
        <name>3,3',5-triiodo-L-thyronine</name>
        <dbReference type="ChEBI" id="CHEBI:533015"/>
    </ligand>
</feature>
<feature type="splice variant" id="VSP_003621" description="In isoform Alpha-1." evidence="22 23">
    <original>EREVQSSILYKGAAAEGRPGGSLGVHPEGQQLLGMHVVQGPQVRQLEQQLGEAGSLQGPVLQHQSPKSPQQRLLELLHRSGILHARAVCGEDDSSEADSPSSSEEEPEVCEDLAGNAASP</original>
    <variation>VTDLRMIGACHASRFLHMKVECPTELFPPLFLEVFEDQEV</variation>
    <location>
        <begin position="371"/>
        <end position="490"/>
    </location>
</feature>
<feature type="splice variant" id="VSP_003623" description="In isoform Alpha-4." evidence="24">
    <location>
        <begin position="371"/>
        <end position="412"/>
    </location>
</feature>
<feature type="splice variant" id="VSP_003622" description="In isoform Alpha-3." evidence="21">
    <location>
        <begin position="371"/>
        <end position="409"/>
    </location>
</feature>
<feature type="sequence variant" id="VAR_074559" description="In CHNG6; no effect on T3 binding; no effect on thyroid hormone-dependent transcriptional activation; dbSNP:rs1555545033." evidence="15">
    <original>A</original>
    <variation>V</variation>
    <location>
        <position position="263"/>
    </location>
</feature>
<feature type="sequence variant" id="VAR_074560" description="In CHNG6; atypical phenotype; weak reduction in transcriptional activation." evidence="17">
    <original>N</original>
    <variation>Y</variation>
    <location>
        <position position="359"/>
    </location>
</feature>
<feature type="mutagenesis site" description="No effect on thyroid hormone binding." evidence="8 12">
    <original>S</original>
    <variation>N</variation>
    <location>
        <position position="277"/>
    </location>
</feature>
<feature type="sequence conflict" description="In Ref. 4; CAA68539." evidence="25" ref="4">
    <original>T</original>
    <variation>S</variation>
    <location>
        <position position="37"/>
    </location>
</feature>
<feature type="sequence conflict" description="In Ref. 4; CAA68539." evidence="25" ref="4">
    <original>G</original>
    <variation>A</variation>
    <location>
        <position position="119"/>
    </location>
</feature>
<feature type="sequence conflict" description="In Ref. 1; CAB57886/CAA38899." evidence="25" ref="1">
    <original>E</original>
    <variation>A</variation>
    <location>
        <position position="285"/>
    </location>
</feature>
<feature type="helix" evidence="30">
    <location>
        <begin position="148"/>
        <end position="151"/>
    </location>
</feature>
<feature type="turn" evidence="30">
    <location>
        <begin position="152"/>
        <end position="154"/>
    </location>
</feature>
<feature type="helix" evidence="30">
    <location>
        <begin position="162"/>
        <end position="176"/>
    </location>
</feature>
<feature type="turn" evidence="29">
    <location>
        <begin position="180"/>
        <end position="184"/>
    </location>
</feature>
<feature type="turn" evidence="30">
    <location>
        <begin position="186"/>
        <end position="188"/>
    </location>
</feature>
<feature type="strand" evidence="30">
    <location>
        <begin position="189"/>
        <end position="191"/>
    </location>
</feature>
<feature type="strand" evidence="29">
    <location>
        <begin position="196"/>
        <end position="198"/>
    </location>
</feature>
<feature type="helix" evidence="30">
    <location>
        <begin position="212"/>
        <end position="234"/>
    </location>
</feature>
<feature type="helix" evidence="30">
    <location>
        <begin position="237"/>
        <end position="240"/>
    </location>
</feature>
<feature type="helix" evidence="30">
    <location>
        <begin position="244"/>
        <end position="264"/>
    </location>
</feature>
<feature type="turn" evidence="30">
    <location>
        <begin position="269"/>
        <end position="272"/>
    </location>
</feature>
<feature type="strand" evidence="30">
    <location>
        <begin position="273"/>
        <end position="276"/>
    </location>
</feature>
<feature type="turn" evidence="30">
    <location>
        <begin position="277"/>
        <end position="279"/>
    </location>
</feature>
<feature type="strand" evidence="30">
    <location>
        <begin position="280"/>
        <end position="282"/>
    </location>
</feature>
<feature type="helix" evidence="30">
    <location>
        <begin position="284"/>
        <end position="289"/>
    </location>
</feature>
<feature type="turn" evidence="30">
    <location>
        <begin position="290"/>
        <end position="293"/>
    </location>
</feature>
<feature type="helix" evidence="30">
    <location>
        <begin position="294"/>
        <end position="306"/>
    </location>
</feature>
<feature type="helix" evidence="30">
    <location>
        <begin position="307"/>
        <end position="309"/>
    </location>
</feature>
<feature type="helix" evidence="30">
    <location>
        <begin position="313"/>
        <end position="324"/>
    </location>
</feature>
<feature type="strand" evidence="30">
    <location>
        <begin position="329"/>
        <end position="331"/>
    </location>
</feature>
<feature type="helix" evidence="30">
    <location>
        <begin position="335"/>
        <end position="356"/>
    </location>
</feature>
<feature type="helix" evidence="30">
    <location>
        <begin position="363"/>
        <end position="370"/>
    </location>
</feature>
<feature type="sequence variant" id="VAR_082873" description="In CHNG6; reduces T3 binding; impairs thyroid hormone-dependent transcriptional activation; no effect on DNA-binding." evidence="15">
    <original>A</original>
    <variation>V</variation>
    <location sequence="P10827-2">
        <position position="263"/>
    </location>
</feature>
<feature type="sequence variant" id="VAR_082874" description="In CHNG6; decreases transcriptional activity; decreases T3 binding." evidence="17">
    <original>N</original>
    <variation>Y</variation>
    <location sequence="P10827-2">
        <position position="359"/>
    </location>
</feature>
<feature type="sequence variant" id="VAR_082875" description="In CHNG6." evidence="16">
    <original>P</original>
    <variation>R</variation>
    <location sequence="P10827-2">
        <position position="398"/>
    </location>
</feature>
<feature type="sequence variant" id="VAR_082876" description="In CHNG6." evidence="25">
    <original>E</original>
    <variation>Q</variation>
    <location sequence="P10827-2">
        <position position="403"/>
    </location>
</feature>
<reference key="1">
    <citation type="journal article" date="1991" name="Nucleic Acids Res.">
        <title>Genomic organization of the human thyroid hormone receptor alpha (c-erbA-1) gene.</title>
        <authorList>
            <person name="Laudet V."/>
            <person name="Begue A."/>
            <person name="Henry C."/>
            <person name="Joubel A."/>
            <person name="Martin P."/>
            <person name="Stehelin D."/>
            <person name="Saule S."/>
        </authorList>
    </citation>
    <scope>NUCLEOTIDE SEQUENCE [GENOMIC DNA / MRNA] (ISOFORMS ALPHA-1 AND ALPHA-2)</scope>
</reference>
<reference key="2">
    <citation type="journal article" date="1989" name="Cell">
        <title>Two erbA homologs encoding proteins with different T3 binding capacities are transcribed from opposite DNA strands of the same genetic locus.</title>
        <authorList>
            <person name="Miyajima N."/>
            <person name="Horiuchi R."/>
            <person name="Shibuya Y."/>
            <person name="Fukushige S."/>
            <person name="Matsubara K."/>
            <person name="Toyoshima K."/>
            <person name="Yamamoto T."/>
        </authorList>
    </citation>
    <scope>NUCLEOTIDE SEQUENCE [MRNA] (ISOFORMS ALPHA-1 AND ALPHA-2)</scope>
</reference>
<reference key="3">
    <citation type="journal article" date="1988" name="Proc. Natl. Acad. Sci. U.S.A.">
        <title>Characterization of a thyroid hormone receptor expressed in human kidney and other tissues.</title>
        <authorList>
            <person name="Nakai A."/>
            <person name="Seino S."/>
            <person name="Sakurai A."/>
            <person name="Szilak I."/>
            <person name="Bell G.I."/>
            <person name="Degroot L.J."/>
        </authorList>
    </citation>
    <scope>NUCLEOTIDE SEQUENCE [MRNA] (ISOFORM ALPHA-2)</scope>
    <source>
        <tissue>Kidney</tissue>
    </source>
</reference>
<reference key="4">
    <citation type="journal article" date="1987" name="Nucleic Acids Res.">
        <title>Nucleotide sequence of cDNA encoding a novel human thyroid hormone receptor.</title>
        <authorList>
            <person name="Pfahl M."/>
            <person name="Benbrook D."/>
        </authorList>
    </citation>
    <scope>NUCLEOTIDE SEQUENCE [MRNA] (ISOFORM ALPHA-2)</scope>
    <source>
        <tissue>Testis</tissue>
    </source>
</reference>
<reference key="5">
    <citation type="journal article" date="1988" name="Mol. Endocrinol.">
        <title>Characterization of a third human thyroid hormone receptor coexpressed with other thyroid hormone receptors in several tissues.</title>
        <authorList>
            <person name="Nakai A."/>
            <person name="Sakurai A."/>
            <person name="Bell G.I."/>
            <person name="Degroot L.J."/>
        </authorList>
    </citation>
    <scope>NUCLEOTIDE SEQUENCE [GENOMIC DNA] (ISOFORM ALPHA-1)</scope>
</reference>
<reference key="6">
    <citation type="journal article" date="2004" name="Nat. Genet.">
        <title>Complete sequencing and characterization of 21,243 full-length human cDNAs.</title>
        <authorList>
            <person name="Ota T."/>
            <person name="Suzuki Y."/>
            <person name="Nishikawa T."/>
            <person name="Otsuki T."/>
            <person name="Sugiyama T."/>
            <person name="Irie R."/>
            <person name="Wakamatsu A."/>
            <person name="Hayashi K."/>
            <person name="Sato H."/>
            <person name="Nagai K."/>
            <person name="Kimura K."/>
            <person name="Makita H."/>
            <person name="Sekine M."/>
            <person name="Obayashi M."/>
            <person name="Nishi T."/>
            <person name="Shibahara T."/>
            <person name="Tanaka T."/>
            <person name="Ishii S."/>
            <person name="Yamamoto J."/>
            <person name="Saito K."/>
            <person name="Kawai Y."/>
            <person name="Isono Y."/>
            <person name="Nakamura Y."/>
            <person name="Nagahari K."/>
            <person name="Murakami K."/>
            <person name="Yasuda T."/>
            <person name="Iwayanagi T."/>
            <person name="Wagatsuma M."/>
            <person name="Shiratori A."/>
            <person name="Sudo H."/>
            <person name="Hosoiri T."/>
            <person name="Kaku Y."/>
            <person name="Kodaira H."/>
            <person name="Kondo H."/>
            <person name="Sugawara M."/>
            <person name="Takahashi M."/>
            <person name="Kanda K."/>
            <person name="Yokoi T."/>
            <person name="Furuya T."/>
            <person name="Kikkawa E."/>
            <person name="Omura Y."/>
            <person name="Abe K."/>
            <person name="Kamihara K."/>
            <person name="Katsuta N."/>
            <person name="Sato K."/>
            <person name="Tanikawa M."/>
            <person name="Yamazaki M."/>
            <person name="Ninomiya K."/>
            <person name="Ishibashi T."/>
            <person name="Yamashita H."/>
            <person name="Murakawa K."/>
            <person name="Fujimori K."/>
            <person name="Tanai H."/>
            <person name="Kimata M."/>
            <person name="Watanabe M."/>
            <person name="Hiraoka S."/>
            <person name="Chiba Y."/>
            <person name="Ishida S."/>
            <person name="Ono Y."/>
            <person name="Takiguchi S."/>
            <person name="Watanabe S."/>
            <person name="Yosida M."/>
            <person name="Hotuta T."/>
            <person name="Kusano J."/>
            <person name="Kanehori K."/>
            <person name="Takahashi-Fujii A."/>
            <person name="Hara H."/>
            <person name="Tanase T.-O."/>
            <person name="Nomura Y."/>
            <person name="Togiya S."/>
            <person name="Komai F."/>
            <person name="Hara R."/>
            <person name="Takeuchi K."/>
            <person name="Arita M."/>
            <person name="Imose N."/>
            <person name="Musashino K."/>
            <person name="Yuuki H."/>
            <person name="Oshima A."/>
            <person name="Sasaki N."/>
            <person name="Aotsuka S."/>
            <person name="Yoshikawa Y."/>
            <person name="Matsunawa H."/>
            <person name="Ichihara T."/>
            <person name="Shiohata N."/>
            <person name="Sano S."/>
            <person name="Moriya S."/>
            <person name="Momiyama H."/>
            <person name="Satoh N."/>
            <person name="Takami S."/>
            <person name="Terashima Y."/>
            <person name="Suzuki O."/>
            <person name="Nakagawa S."/>
            <person name="Senoh A."/>
            <person name="Mizoguchi H."/>
            <person name="Goto Y."/>
            <person name="Shimizu F."/>
            <person name="Wakebe H."/>
            <person name="Hishigaki H."/>
            <person name="Watanabe T."/>
            <person name="Sugiyama A."/>
            <person name="Takemoto M."/>
            <person name="Kawakami B."/>
            <person name="Yamazaki M."/>
            <person name="Watanabe K."/>
            <person name="Kumagai A."/>
            <person name="Itakura S."/>
            <person name="Fukuzumi Y."/>
            <person name="Fujimori Y."/>
            <person name="Komiyama M."/>
            <person name="Tashiro H."/>
            <person name="Tanigami A."/>
            <person name="Fujiwara T."/>
            <person name="Ono T."/>
            <person name="Yamada K."/>
            <person name="Fujii Y."/>
            <person name="Ozaki K."/>
            <person name="Hirao M."/>
            <person name="Ohmori Y."/>
            <person name="Kawabata A."/>
            <person name="Hikiji T."/>
            <person name="Kobatake N."/>
            <person name="Inagaki H."/>
            <person name="Ikema Y."/>
            <person name="Okamoto S."/>
            <person name="Okitani R."/>
            <person name="Kawakami T."/>
            <person name="Noguchi S."/>
            <person name="Itoh T."/>
            <person name="Shigeta K."/>
            <person name="Senba T."/>
            <person name="Matsumura K."/>
            <person name="Nakajima Y."/>
            <person name="Mizuno T."/>
            <person name="Morinaga M."/>
            <person name="Sasaki M."/>
            <person name="Togashi T."/>
            <person name="Oyama M."/>
            <person name="Hata H."/>
            <person name="Watanabe M."/>
            <person name="Komatsu T."/>
            <person name="Mizushima-Sugano J."/>
            <person name="Satoh T."/>
            <person name="Shirai Y."/>
            <person name="Takahashi Y."/>
            <person name="Nakagawa K."/>
            <person name="Okumura K."/>
            <person name="Nagase T."/>
            <person name="Nomura N."/>
            <person name="Kikuchi H."/>
            <person name="Masuho Y."/>
            <person name="Yamashita R."/>
            <person name="Nakai K."/>
            <person name="Yada T."/>
            <person name="Nakamura Y."/>
            <person name="Ohara O."/>
            <person name="Isogai T."/>
            <person name="Sugano S."/>
        </authorList>
    </citation>
    <scope>NUCLEOTIDE SEQUENCE [LARGE SCALE MRNA] (ISOFORM ALPHA-2)</scope>
    <source>
        <tissue>Brain</tissue>
    </source>
</reference>
<reference key="7">
    <citation type="submission" date="2005-07" db="EMBL/GenBank/DDBJ databases">
        <authorList>
            <person name="Mural R.J."/>
            <person name="Istrail S."/>
            <person name="Sutton G.G."/>
            <person name="Florea L."/>
            <person name="Halpern A.L."/>
            <person name="Mobarry C.M."/>
            <person name="Lippert R."/>
            <person name="Walenz B."/>
            <person name="Shatkay H."/>
            <person name="Dew I."/>
            <person name="Miller J.R."/>
            <person name="Flanigan M.J."/>
            <person name="Edwards N.J."/>
            <person name="Bolanos R."/>
            <person name="Fasulo D."/>
            <person name="Halldorsson B.V."/>
            <person name="Hannenhalli S."/>
            <person name="Turner R."/>
            <person name="Yooseph S."/>
            <person name="Lu F."/>
            <person name="Nusskern D.R."/>
            <person name="Shue B.C."/>
            <person name="Zheng X.H."/>
            <person name="Zhong F."/>
            <person name="Delcher A.L."/>
            <person name="Huson D.H."/>
            <person name="Kravitz S.A."/>
            <person name="Mouchard L."/>
            <person name="Reinert K."/>
            <person name="Remington K.A."/>
            <person name="Clark A.G."/>
            <person name="Waterman M.S."/>
            <person name="Eichler E.E."/>
            <person name="Adams M.D."/>
            <person name="Hunkapiller M.W."/>
            <person name="Myers E.W."/>
            <person name="Venter J.C."/>
        </authorList>
    </citation>
    <scope>NUCLEOTIDE SEQUENCE [LARGE SCALE GENOMIC DNA]</scope>
</reference>
<reference key="8">
    <citation type="journal article" date="2004" name="Genome Res.">
        <title>The status, quality, and expansion of the NIH full-length cDNA project: the Mammalian Gene Collection (MGC).</title>
        <authorList>
            <consortium name="The MGC Project Team"/>
        </authorList>
    </citation>
    <scope>NUCLEOTIDE SEQUENCE [LARGE SCALE MRNA] (ISOFORMS ALPHA-2 AND ALPHA-3)</scope>
    <source>
        <tissue>Brain</tissue>
        <tissue>Hippocampus</tissue>
        <tissue>Muscle</tissue>
    </source>
</reference>
<reference key="9">
    <citation type="journal article" date="1987" name="Science">
        <title>A novel thyroid hormone receptor encoded by a cDNA clone from a human testis library.</title>
        <authorList>
            <person name="Benbrook D."/>
            <person name="Pfahl M."/>
        </authorList>
    </citation>
    <scope>NUCLEOTIDE SEQUENCE [MRNA] OF 1-370</scope>
</reference>
<reference key="10">
    <citation type="submission" date="2002-06" db="EMBL/GenBank/DDBJ databases">
        <authorList>
            <person name="Liu C."/>
            <person name="Li L."/>
            <person name="Liu B."/>
            <person name="Zang X."/>
        </authorList>
    </citation>
    <scope>NUCLEOTIDE SEQUENCE [MRNA] OF 280-451 (ISOFORM ALPHA-4)</scope>
    <source>
        <tissue>Brain cortex</tissue>
    </source>
</reference>
<reference key="11">
    <citation type="journal article" date="1996" name="J. Biol. Chem.">
        <title>Thyroid hormone receptor variant alpha2. Role of the ninth heptad in dna binding, heterodimerization with retinoid X receptors, and dominant negative activity.</title>
        <authorList>
            <person name="Yang Y.Z."/>
            <person name="Burgos-Trinidad M."/>
            <person name="Wu Y."/>
            <person name="Koenig R.J."/>
        </authorList>
    </citation>
    <scope>FUNCTION (ISOFORM ALPHA-2)</scope>
</reference>
<reference key="12">
    <citation type="journal article" date="1997" name="Cell">
        <title>Nuclear receptor coactivator ACTR is a novel histone acetyltransferase and forms a multimeric activation complex with P/CAF and CBP/p300.</title>
        <authorList>
            <person name="Chen H."/>
            <person name="Lin R.J."/>
            <person name="Schiltz R.L."/>
            <person name="Chakravarti D."/>
            <person name="Nash A."/>
            <person name="Nagy L."/>
            <person name="Privalsky M.L."/>
            <person name="Nakatani Y."/>
            <person name="Evans R.M."/>
        </authorList>
    </citation>
    <scope>INTERACTION WITH NCOA3</scope>
</reference>
<reference key="13">
    <citation type="journal article" date="1998" name="Oncogene">
        <title>Characterization of Brx, a novel Dbl family member that modulates estrogen receptor action.</title>
        <authorList>
            <person name="Rubino D."/>
            <person name="Driggers P."/>
            <person name="Arbit D."/>
            <person name="Kemp L."/>
            <person name="Miller B."/>
            <person name="Coso O."/>
            <person name="Pagliai K."/>
            <person name="Gray K."/>
            <person name="Gutkind S."/>
            <person name="Segars J."/>
        </authorList>
    </citation>
    <scope>INTERACTION WITH AKAP13</scope>
</reference>
<reference key="14">
    <citation type="journal article" date="1999" name="J. Biol. Chem.">
        <title>A nuclear factor ASC-2, as a cancer-amplified transcriptional coactivator essential for ligand-dependent transactivation by nuclear receptors in vivo.</title>
        <authorList>
            <person name="Lee S.-K."/>
            <person name="Anzick S.L."/>
            <person name="Choi J.-E."/>
            <person name="Bubendorf L."/>
            <person name="Guan X.-Y."/>
            <person name="Jung Y.-K."/>
            <person name="Kallioniemi O.-P."/>
            <person name="Kononen J."/>
            <person name="Trent J.M."/>
            <person name="Azorsa D."/>
            <person name="Jhun B.-H."/>
            <person name="Cheong J.H."/>
            <person name="Lee Y.C."/>
            <person name="Meltzer P.S."/>
            <person name="Lee J.W."/>
        </authorList>
    </citation>
    <scope>INTERACTION WITH NCOA6</scope>
</reference>
<reference key="15">
    <citation type="journal article" date="2003" name="Proc. Natl. Acad. Sci. U.S.A.">
        <title>Ligand selectivity by seeking hydrophobicity in thyroid hormone receptor.</title>
        <authorList>
            <person name="Borngraeber S."/>
            <person name="Budny M.J."/>
            <person name="Chiellini G."/>
            <person name="Cunha-Lima S.T."/>
            <person name="Togashi M."/>
            <person name="Webb P."/>
            <person name="Baxter J.D."/>
            <person name="Scanlan T.S."/>
            <person name="Fletterick R.J."/>
        </authorList>
    </citation>
    <scope>FUNCTION</scope>
    <scope>MUTAGENESIS OF SER-277</scope>
</reference>
<reference key="16">
    <citation type="journal article" date="2007" name="PLoS ONE">
        <title>Identification of a novel modulator of thyroid hormone receptor-mediated action.</title>
        <authorList>
            <person name="Baumgartner B.G."/>
            <person name="Orpinell M."/>
            <person name="Duran J."/>
            <person name="Ribas V."/>
            <person name="Burghardt H.E."/>
            <person name="Bach D."/>
            <person name="Villar A.V."/>
            <person name="Paz J.C."/>
            <person name="Gonzalez M."/>
            <person name="Camps M."/>
            <person name="Oriola J."/>
            <person name="Rivera F."/>
            <person name="Palacin M."/>
            <person name="Zorzano A."/>
        </authorList>
    </citation>
    <scope>INTERACTION WITH TP53INP2</scope>
</reference>
<reference key="17">
    <citation type="journal article" date="2010" name="BMC Mol. Biol.">
        <title>The transforming acidic coiled coil (TACC1) protein modulates the transcriptional activity of the nuclear receptors TR and RAR.</title>
        <authorList>
            <person name="Guyot R."/>
            <person name="Vincent S."/>
            <person name="Bertin J."/>
            <person name="Samarut J."/>
            <person name="Ravel-Chapuis P."/>
        </authorList>
    </citation>
    <scope>INTERACTION WITH TACC1</scope>
</reference>
<reference key="18">
    <citation type="journal article" date="2012" name="N. Engl. J. Med.">
        <title>A mutation in the thyroid hormone receptor alpha gene.</title>
        <authorList>
            <person name="Bochukova E."/>
            <person name="Schoenmakers N."/>
            <person name="Agostini M."/>
            <person name="Schoenmakers E."/>
            <person name="Rajanayagam O."/>
            <person name="Keogh J.M."/>
            <person name="Henning E."/>
            <person name="Reinemund J."/>
            <person name="Gevers E."/>
            <person name="Sarri M."/>
            <person name="Downes K."/>
            <person name="Offiah A."/>
            <person name="Albanese A."/>
            <person name="Halsall D."/>
            <person name="Schwabe J.W."/>
            <person name="Bain M."/>
            <person name="Lindley K."/>
            <person name="Muntoni F."/>
            <person name="Khadem F.V."/>
            <person name="Dattani M."/>
            <person name="Farooqi I.S."/>
            <person name="Gurnell M."/>
            <person name="Chatterjee K."/>
        </authorList>
    </citation>
    <scope>INVOLVEMENT IN CHNG6</scope>
</reference>
<reference key="19">
    <citation type="journal article" date="2003" name="J. Med. Chem.">
        <title>Thyroid receptor ligands. 1. Agonist ligands selective for the thyroid receptor beta1.</title>
        <authorList>
            <person name="Ye L."/>
            <person name="Li Y.L."/>
            <person name="Mellstrom K."/>
            <person name="Mellin C."/>
            <person name="Bladh L.G."/>
            <person name="Koehler K."/>
            <person name="Garg N."/>
            <person name="Garcia Collazo A.M."/>
            <person name="Litten C."/>
            <person name="Husman B."/>
            <person name="Persson K."/>
            <person name="Ljunggren J."/>
            <person name="Grover G."/>
            <person name="Sleph P.G."/>
            <person name="George R."/>
            <person name="Malm J."/>
        </authorList>
    </citation>
    <scope>X-RAY CRYSTALLOGRAPHY (2.50 ANGSTROMS) OF 148-370 IN COMPLEX WITH SYNTHETIC AGONIST</scope>
    <scope>FUNCTION</scope>
</reference>
<reference evidence="27 28" key="20">
    <citation type="journal article" date="2006" name="J. Mol. Biol.">
        <title>Structural rearrangements in the thyroid hormone receptor hinge domain and their putative role in the receptor function.</title>
        <authorList>
            <person name="Nascimento A.S."/>
            <person name="Dias S.M."/>
            <person name="Nunes F.M."/>
            <person name="Aparicio R."/>
            <person name="Ambrosio A.L."/>
            <person name="Bleicher L."/>
            <person name="Figueira A.C."/>
            <person name="Santos M.A."/>
            <person name="de Oliveira Neto M."/>
            <person name="Fischer H."/>
            <person name="Togashi M."/>
            <person name="Craievich A.F."/>
            <person name="Garratt R.C."/>
            <person name="Baxter J.D."/>
            <person name="Webb P."/>
            <person name="Polikarpov I."/>
        </authorList>
    </citation>
    <scope>X-RAY CRYSTALLOGRAPHY (1.87 ANGSTROMS) OF 148-370 IN COMPLEX WITH TRIIODOTHYRONINE</scope>
    <scope>SUBUNIT</scope>
</reference>
<reference key="21">
    <citation type="journal article" date="2008" name="BMC Struct. Biol.">
        <title>Structural basis of GC-1 selectivity for thyroid hormone receptor isoforms.</title>
        <authorList>
            <person name="Bleicher L."/>
            <person name="Aparicio R."/>
            <person name="Nunes F.M."/>
            <person name="Martinez L."/>
            <person name="Gomes Dias S.M."/>
            <person name="Figueira A.C."/>
            <person name="Santos M.A."/>
            <person name="Venturelli W.H."/>
            <person name="da Silva R."/>
            <person name="Donate P.M."/>
            <person name="Neves F.A."/>
            <person name="Simeoni L.A."/>
            <person name="Baxter J.D."/>
            <person name="Webb P."/>
            <person name="Skaf M.S."/>
            <person name="Polikarpov I."/>
        </authorList>
    </citation>
    <scope>X-RAY CRYSTALLOGRAPHY (1.85 ANGSTROMS) OF 148-370 IN COMPLEX WITH SYNTHETIC AGONIST</scope>
    <scope>FUNCTION</scope>
</reference>
<reference key="22">
    <citation type="journal article" date="2009" name="Proc. Natl. Acad. Sci. U.S.A.">
        <title>Gaining ligand selectivity in thyroid hormone receptors via entropy.</title>
        <authorList>
            <person name="Martinez L."/>
            <person name="Nascimento A.S."/>
            <person name="Nunes F.M."/>
            <person name="Phillips K."/>
            <person name="Aparicio R."/>
            <person name="Dias S.M."/>
            <person name="Figueira A.C."/>
            <person name="Lin J.H."/>
            <person name="Nguyen P."/>
            <person name="Apriletti J.W."/>
            <person name="Neves F.A."/>
            <person name="Baxter J.D."/>
            <person name="Webb P."/>
            <person name="Skaf M.S."/>
            <person name="Polikarpov I."/>
        </authorList>
    </citation>
    <scope>X-RAY CRYSTALLOGRAPHY (2.01 ANGSTROMS) OF 148-370 IN COMPLEX WITH SYNTHETIC AGONIST</scope>
    <scope>FUNCTION</scope>
    <scope>MUTAGENESIS OF SER-277</scope>
</reference>
<reference key="23">
    <citation type="journal article" date="2014" name="Lancet Diabetes Endocrinol.">
        <title>Resistance to thyroid hormone caused by a mutation in thyroid hormone receptor (TR)alpha1 and TRalpha2: clinical, biochemical, and genetic analyses of three related patients.</title>
        <authorList>
            <person name="Moran C."/>
            <person name="Agostini M."/>
            <person name="Visser W.E."/>
            <person name="Schoenmakers E."/>
            <person name="Schoenmakers N."/>
            <person name="Offiah A.C."/>
            <person name="Poole K."/>
            <person name="Rajanayagam O."/>
            <person name="Lyons G."/>
            <person name="Halsall D."/>
            <person name="Gurnell M."/>
            <person name="Chrysis D."/>
            <person name="Efthymiadou A."/>
            <person name="Buchanan C."/>
            <person name="Aylwin S."/>
            <person name="Chatterjee K.K."/>
        </authorList>
    </citation>
    <scope>VARIANT CHNG6 VAL-263</scope>
    <scope>CHARACTERIZATION OF VARIANT VAL-263 (ISOFORM ALPHA-1)</scope>
    <scope>CHARACTERIZATION OF VARIANT VAL-263 (ISOFORM ALPHA-2)</scope>
</reference>
<reference key="24">
    <citation type="journal article" date="2015" name="J. Clin. Endocrinol. Metab.">
        <title>A novel mutation in THRA gene associated with an atypical phenotype of resistance to thyroid hormone.</title>
        <authorList>
            <person name="Espiard S."/>
            <person name="Savagner F."/>
            <person name="Flamant F."/>
            <person name="Vlaeminck-Guillem V."/>
            <person name="Guyot R."/>
            <person name="Munier M."/>
            <person name="d'Herbomez M."/>
            <person name="Bourguet W."/>
            <person name="Pinto G."/>
            <person name="Rose C."/>
            <person name="Rodien P."/>
            <person name="Wemeau J.L."/>
        </authorList>
    </citation>
    <scope>VARIANT CHNG6 TYR-359</scope>
    <scope>CHARACTERIZATION OF VARIANT TYR-359 (ISOFORM ALPHA-1)</scope>
    <scope>CHARACTERIZATION OF VARIANT TYR-359 (ISOFORM ALPHA-2)</scope>
</reference>
<reference key="25">
    <citation type="journal article" date="2015" name="J. Med. Genet.">
        <title>Thyroid hormone resistance syndrome due to mutations in the thyroid hormone receptor alpha gene (THRA).</title>
        <authorList>
            <person name="Tylki-Szymanska A."/>
            <person name="Acuna-Hidalgo R."/>
            <person name="Krajewska-Walasek M."/>
            <person name="Lecka-Ambroziak A."/>
            <person name="Steehouwer M."/>
            <person name="Gilissen C."/>
            <person name="Brunner H.G."/>
            <person name="Jurecka A."/>
            <person name="Rozdzynska-Swiatkowska A."/>
            <person name="Hoischen A."/>
            <person name="Chrzanowska K.H."/>
        </authorList>
    </citation>
    <scope>VARIANTS CHNG6 ARG-398 AND LYS-403 (ISOFORM ALPHA-1)</scope>
</reference>
<dbReference type="EMBL" id="X55074">
    <property type="protein sequence ID" value="CAB57886.1"/>
    <property type="molecule type" value="Genomic_DNA"/>
</dbReference>
<dbReference type="EMBL" id="X55073">
    <property type="protein sequence ID" value="CAB57886.1"/>
    <property type="status" value="JOINED"/>
    <property type="molecule type" value="Genomic_DNA"/>
</dbReference>
<dbReference type="EMBL" id="X55070">
    <property type="protein sequence ID" value="CAB57886.1"/>
    <property type="status" value="JOINED"/>
    <property type="molecule type" value="Genomic_DNA"/>
</dbReference>
<dbReference type="EMBL" id="X55071">
    <property type="protein sequence ID" value="CAB57886.1"/>
    <property type="status" value="JOINED"/>
    <property type="molecule type" value="Genomic_DNA"/>
</dbReference>
<dbReference type="EMBL" id="X55004">
    <property type="protein sequence ID" value="CAB57886.1"/>
    <property type="status" value="JOINED"/>
    <property type="molecule type" value="Genomic_DNA"/>
</dbReference>
<dbReference type="EMBL" id="X55069">
    <property type="protein sequence ID" value="CAB57886.1"/>
    <property type="status" value="JOINED"/>
    <property type="molecule type" value="Genomic_DNA"/>
</dbReference>
<dbReference type="EMBL" id="X55068">
    <property type="protein sequence ID" value="CAB57886.1"/>
    <property type="status" value="JOINED"/>
    <property type="molecule type" value="Genomic_DNA"/>
</dbReference>
<dbReference type="EMBL" id="X55066">
    <property type="protein sequence ID" value="CAB57886.1"/>
    <property type="status" value="JOINED"/>
    <property type="molecule type" value="Genomic_DNA"/>
</dbReference>
<dbReference type="EMBL" id="X55005">
    <property type="protein sequence ID" value="CAA38749.1"/>
    <property type="molecule type" value="mRNA"/>
</dbReference>
<dbReference type="EMBL" id="X55074">
    <property type="protein sequence ID" value="CAA38899.1"/>
    <property type="molecule type" value="Genomic_DNA"/>
</dbReference>
<dbReference type="EMBL" id="X55073">
    <property type="protein sequence ID" value="CAA38899.1"/>
    <property type="status" value="JOINED"/>
    <property type="molecule type" value="Genomic_DNA"/>
</dbReference>
<dbReference type="EMBL" id="X55070">
    <property type="protein sequence ID" value="CAA38899.1"/>
    <property type="status" value="JOINED"/>
    <property type="molecule type" value="Genomic_DNA"/>
</dbReference>
<dbReference type="EMBL" id="X55071">
    <property type="protein sequence ID" value="CAA38899.1"/>
    <property type="status" value="JOINED"/>
    <property type="molecule type" value="Genomic_DNA"/>
</dbReference>
<dbReference type="EMBL" id="X55004">
    <property type="protein sequence ID" value="CAA38899.1"/>
    <property type="status" value="JOINED"/>
    <property type="molecule type" value="Genomic_DNA"/>
</dbReference>
<dbReference type="EMBL" id="X55069">
    <property type="protein sequence ID" value="CAA38899.1"/>
    <property type="status" value="JOINED"/>
    <property type="molecule type" value="Genomic_DNA"/>
</dbReference>
<dbReference type="EMBL" id="X55068">
    <property type="protein sequence ID" value="CAA38899.1"/>
    <property type="status" value="JOINED"/>
    <property type="molecule type" value="Genomic_DNA"/>
</dbReference>
<dbReference type="EMBL" id="M24899">
    <property type="protein sequence ID" value="AAA35783.1"/>
    <property type="molecule type" value="mRNA"/>
</dbReference>
<dbReference type="EMBL" id="M24900">
    <property type="protein sequence ID" value="AAA52333.1"/>
    <property type="molecule type" value="mRNA"/>
</dbReference>
<dbReference type="EMBL" id="J03239">
    <property type="protein sequence ID" value="AAA61176.1"/>
    <property type="molecule type" value="mRNA"/>
</dbReference>
<dbReference type="EMBL" id="Y00479">
    <property type="protein sequence ID" value="CAA68539.1"/>
    <property type="molecule type" value="mRNA"/>
</dbReference>
<dbReference type="EMBL" id="M24748">
    <property type="protein sequence ID" value="AAA66021.1"/>
    <property type="molecule type" value="Genomic_DNA"/>
</dbReference>
<dbReference type="EMBL" id="AK290530">
    <property type="protein sequence ID" value="BAF83219.1"/>
    <property type="molecule type" value="mRNA"/>
</dbReference>
<dbReference type="EMBL" id="CH471152">
    <property type="protein sequence ID" value="EAW60632.1"/>
    <property type="molecule type" value="Genomic_DNA"/>
</dbReference>
<dbReference type="EMBL" id="BC000261">
    <property type="protein sequence ID" value="AAH00261.1"/>
    <property type="molecule type" value="mRNA"/>
</dbReference>
<dbReference type="EMBL" id="BC002728">
    <property type="protein sequence ID" value="AAH02728.1"/>
    <property type="molecule type" value="mRNA"/>
</dbReference>
<dbReference type="EMBL" id="BC035137">
    <property type="protein sequence ID" value="AAH35137.1"/>
    <property type="molecule type" value="mRNA"/>
</dbReference>
<dbReference type="EMBL" id="AF522368">
    <property type="protein sequence ID" value="AAM77692.1"/>
    <property type="molecule type" value="mRNA"/>
</dbReference>
<dbReference type="CCDS" id="CCDS11360.1">
    <molecule id="P10827-1"/>
</dbReference>
<dbReference type="CCDS" id="CCDS42316.1">
    <molecule id="P10827-2"/>
</dbReference>
<dbReference type="CCDS" id="CCDS58546.1">
    <molecule id="P10827-3"/>
</dbReference>
<dbReference type="PIR" id="A30893">
    <property type="entry name" value="A30893"/>
</dbReference>
<dbReference type="PIR" id="A40917">
    <property type="entry name" value="A40917"/>
</dbReference>
<dbReference type="PIR" id="S06163">
    <property type="entry name" value="S06163"/>
</dbReference>
<dbReference type="RefSeq" id="NP_001177847.1">
    <molecule id="P10827-3"/>
    <property type="nucleotide sequence ID" value="NM_001190918.2"/>
</dbReference>
<dbReference type="RefSeq" id="NP_001177848.1">
    <molecule id="P10827-1"/>
    <property type="nucleotide sequence ID" value="NM_001190919.2"/>
</dbReference>
<dbReference type="RefSeq" id="NP_003241.2">
    <molecule id="P10827-1"/>
    <property type="nucleotide sequence ID" value="NM_003250.5"/>
</dbReference>
<dbReference type="RefSeq" id="NP_955366.1">
    <molecule id="P10827-2"/>
    <property type="nucleotide sequence ID" value="NM_199334.5"/>
</dbReference>
<dbReference type="RefSeq" id="XP_047292588.1">
    <molecule id="P10827-2"/>
    <property type="nucleotide sequence ID" value="XM_047436632.1"/>
</dbReference>
<dbReference type="RefSeq" id="XP_054173007.1">
    <molecule id="P10827-2"/>
    <property type="nucleotide sequence ID" value="XM_054317032.1"/>
</dbReference>
<dbReference type="PDB" id="1NAV">
    <property type="method" value="X-ray"/>
    <property type="resolution" value="2.50 A"/>
    <property type="chains" value="A=148-370"/>
</dbReference>
<dbReference type="PDB" id="2H77">
    <property type="method" value="X-ray"/>
    <property type="resolution" value="2.33 A"/>
    <property type="chains" value="A=148-370"/>
</dbReference>
<dbReference type="PDB" id="2H79">
    <property type="method" value="X-ray"/>
    <property type="resolution" value="1.87 A"/>
    <property type="chains" value="A=148-370"/>
</dbReference>
<dbReference type="PDB" id="3HZF">
    <property type="method" value="X-ray"/>
    <property type="resolution" value="2.50 A"/>
    <property type="chains" value="A=148-370"/>
</dbReference>
<dbReference type="PDB" id="3ILZ">
    <property type="method" value="X-ray"/>
    <property type="resolution" value="1.85 A"/>
    <property type="chains" value="A=148-370"/>
</dbReference>
<dbReference type="PDB" id="3JZB">
    <property type="method" value="X-ray"/>
    <property type="resolution" value="2.01 A"/>
    <property type="chains" value="A=148-370"/>
</dbReference>
<dbReference type="PDB" id="4LNW">
    <property type="method" value="X-ray"/>
    <property type="resolution" value="1.90 A"/>
    <property type="chains" value="A=148-370"/>
</dbReference>
<dbReference type="PDB" id="4LNX">
    <property type="method" value="X-ray"/>
    <property type="resolution" value="2.05 A"/>
    <property type="chains" value="A=148-370"/>
</dbReference>
<dbReference type="PDB" id="7QDT">
    <property type="method" value="X-ray"/>
    <property type="resolution" value="3.00 A"/>
    <property type="chains" value="A=156-370"/>
</dbReference>
<dbReference type="PDB" id="8RQO">
    <property type="method" value="X-ray"/>
    <property type="resolution" value="2.74 A"/>
    <property type="chains" value="A=148-370"/>
</dbReference>
<dbReference type="PDBsum" id="1NAV"/>
<dbReference type="PDBsum" id="2H77"/>
<dbReference type="PDBsum" id="2H79"/>
<dbReference type="PDBsum" id="3HZF"/>
<dbReference type="PDBsum" id="3ILZ"/>
<dbReference type="PDBsum" id="3JZB"/>
<dbReference type="PDBsum" id="4LNW"/>
<dbReference type="PDBsum" id="4LNX"/>
<dbReference type="PDBsum" id="7QDT"/>
<dbReference type="PDBsum" id="8RQO"/>
<dbReference type="SMR" id="P10827"/>
<dbReference type="BioGRID" id="112923">
    <property type="interactions" value="98"/>
</dbReference>
<dbReference type="ComplexPortal" id="CPX-662">
    <molecule id="P10827-2"/>
    <property type="entry name" value="RXRalpha-TRalpha nuclear hormone receptor complex"/>
</dbReference>
<dbReference type="CORUM" id="P10827"/>
<dbReference type="DIP" id="DIP-31452N"/>
<dbReference type="FunCoup" id="P10827">
    <property type="interactions" value="2085"/>
</dbReference>
<dbReference type="IntAct" id="P10827">
    <property type="interactions" value="32"/>
</dbReference>
<dbReference type="MINT" id="P10827"/>
<dbReference type="STRING" id="9606.ENSP00000264637"/>
<dbReference type="BindingDB" id="P10827"/>
<dbReference type="ChEMBL" id="CHEMBL1860"/>
<dbReference type="DrugBank" id="DB01118">
    <property type="generic name" value="Amiodarone"/>
</dbReference>
<dbReference type="DrugBank" id="DB00509">
    <property type="generic name" value="Dextrothyroxine"/>
</dbReference>
<dbReference type="DrugBank" id="DB04855">
    <property type="generic name" value="Dronedarone"/>
</dbReference>
<dbReference type="DrugBank" id="DB05035">
    <property type="generic name" value="Eprotirome"/>
</dbReference>
<dbReference type="DrugBank" id="DB03176">
    <property type="generic name" value="KB-141"/>
</dbReference>
<dbReference type="DrugBank" id="DB00451">
    <property type="generic name" value="Levothyroxine"/>
</dbReference>
<dbReference type="DrugBank" id="DB00279">
    <property type="generic name" value="Liothyronine"/>
</dbReference>
<dbReference type="DrugBank" id="DB01583">
    <property type="generic name" value="Liotrix"/>
</dbReference>
<dbReference type="DrugBank" id="DB05235">
    <property type="generic name" value="NRP409"/>
</dbReference>
<dbReference type="DrugBank" id="DB09100">
    <property type="generic name" value="Thyroid, porcine"/>
</dbReference>
<dbReference type="DrugBank" id="DB03604">
    <property type="generic name" value="Tiratricol"/>
</dbReference>
<dbReference type="DrugCentral" id="P10827"/>
<dbReference type="GuidetoPHARMACOLOGY" id="588"/>
<dbReference type="GlyGen" id="P10827">
    <property type="glycosylation" value="2 sites, 1 O-linked glycan (1 site)"/>
</dbReference>
<dbReference type="iPTMnet" id="P10827"/>
<dbReference type="PhosphoSitePlus" id="P10827"/>
<dbReference type="BioMuta" id="THRA"/>
<dbReference type="DMDM" id="135705"/>
<dbReference type="jPOST" id="P10827"/>
<dbReference type="MassIVE" id="P10827"/>
<dbReference type="PaxDb" id="9606-ENSP00000264637"/>
<dbReference type="PeptideAtlas" id="P10827"/>
<dbReference type="ProteomicsDB" id="52657">
    <molecule id="P10827-1"/>
</dbReference>
<dbReference type="ProteomicsDB" id="52658">
    <molecule id="P10827-2"/>
</dbReference>
<dbReference type="ProteomicsDB" id="52659">
    <molecule id="P10827-3"/>
</dbReference>
<dbReference type="ProteomicsDB" id="52660">
    <molecule id="P10827-4"/>
</dbReference>
<dbReference type="ABCD" id="P10827">
    <property type="antibodies" value="2 sequenced antibodies"/>
</dbReference>
<dbReference type="Antibodypedia" id="1300">
    <property type="antibodies" value="645 antibodies from 42 providers"/>
</dbReference>
<dbReference type="DNASU" id="7067"/>
<dbReference type="Ensembl" id="ENST00000264637.8">
    <molecule id="P10827-1"/>
    <property type="protein sequence ID" value="ENSP00000264637.4"/>
    <property type="gene ID" value="ENSG00000126351.13"/>
</dbReference>
<dbReference type="Ensembl" id="ENST00000394121.8">
    <molecule id="P10827-1"/>
    <property type="protein sequence ID" value="ENSP00000377679.4"/>
    <property type="gene ID" value="ENSG00000126351.13"/>
</dbReference>
<dbReference type="Ensembl" id="ENST00000450525.7">
    <molecule id="P10827-2"/>
    <property type="protein sequence ID" value="ENSP00000395641.3"/>
    <property type="gene ID" value="ENSG00000126351.13"/>
</dbReference>
<dbReference type="Ensembl" id="ENST00000546243.5">
    <molecule id="P10827-2"/>
    <property type="protein sequence ID" value="ENSP00000443972.1"/>
    <property type="gene ID" value="ENSG00000126351.13"/>
</dbReference>
<dbReference type="Ensembl" id="ENST00000584985.5">
    <molecule id="P10827-3"/>
    <property type="protein sequence ID" value="ENSP00000463466.1"/>
    <property type="gene ID" value="ENSG00000126351.13"/>
</dbReference>
<dbReference type="GeneID" id="7067"/>
<dbReference type="KEGG" id="hsa:7067"/>
<dbReference type="MANE-Select" id="ENST00000450525.7">
    <molecule id="P10827-2"/>
    <property type="protein sequence ID" value="ENSP00000395641.3"/>
    <property type="RefSeq nucleotide sequence ID" value="NM_199334.5"/>
    <property type="RefSeq protein sequence ID" value="NP_955366.1"/>
</dbReference>
<dbReference type="UCSC" id="uc002htw.4">
    <molecule id="P10827-1"/>
    <property type="organism name" value="human"/>
</dbReference>
<dbReference type="AGR" id="HGNC:11796"/>
<dbReference type="CTD" id="7067"/>
<dbReference type="DisGeNET" id="7067"/>
<dbReference type="GeneCards" id="THRA"/>
<dbReference type="HGNC" id="HGNC:11796">
    <property type="gene designation" value="THRA"/>
</dbReference>
<dbReference type="HPA" id="ENSG00000126351">
    <property type="expression patterns" value="Tissue enriched (brain)"/>
</dbReference>
<dbReference type="MalaCards" id="THRA"/>
<dbReference type="MIM" id="190120">
    <property type="type" value="gene"/>
</dbReference>
<dbReference type="MIM" id="614450">
    <property type="type" value="phenotype"/>
</dbReference>
<dbReference type="neXtProt" id="NX_P10827"/>
<dbReference type="OpenTargets" id="ENSG00000126351"/>
<dbReference type="Orphanet" id="566231">
    <property type="disease" value="Resistance to thyroid hormone due to a mutation in thyroid hormone receptor alpha"/>
</dbReference>
<dbReference type="PharmGKB" id="PA36507"/>
<dbReference type="VEuPathDB" id="HostDB:ENSG00000126351"/>
<dbReference type="eggNOG" id="KOG3575">
    <property type="taxonomic scope" value="Eukaryota"/>
</dbReference>
<dbReference type="GeneTree" id="ENSGT00940000157917"/>
<dbReference type="HOGENOM" id="CLU_007368_18_0_1"/>
<dbReference type="InParanoid" id="P10827"/>
<dbReference type="OMA" id="IMCLRIA"/>
<dbReference type="OrthoDB" id="6081310at2759"/>
<dbReference type="PAN-GO" id="P10827">
    <property type="GO annotations" value="6 GO annotations based on evolutionary models"/>
</dbReference>
<dbReference type="PhylomeDB" id="P10827"/>
<dbReference type="TreeFam" id="TF328382"/>
<dbReference type="PathwayCommons" id="P10827"/>
<dbReference type="Reactome" id="R-HSA-383280">
    <property type="pathway name" value="Nuclear Receptor transcription pathway"/>
</dbReference>
<dbReference type="Reactome" id="R-HSA-4090294">
    <molecule id="P10827-2"/>
    <property type="pathway name" value="SUMOylation of intracellular receptors"/>
</dbReference>
<dbReference type="SignaLink" id="P10827"/>
<dbReference type="SIGNOR" id="P10827"/>
<dbReference type="BioGRID-ORCS" id="7067">
    <property type="hits" value="13 hits in 1192 CRISPR screens"/>
</dbReference>
<dbReference type="ChiTaRS" id="THRA">
    <property type="organism name" value="human"/>
</dbReference>
<dbReference type="EvolutionaryTrace" id="P10827"/>
<dbReference type="GeneWiki" id="Thyroid_hormone_receptor_alpha"/>
<dbReference type="GenomeRNAi" id="7067"/>
<dbReference type="Pharos" id="P10827">
    <property type="development level" value="Tclin"/>
</dbReference>
<dbReference type="PRO" id="PR:P10827"/>
<dbReference type="Proteomes" id="UP000005640">
    <property type="component" value="Chromosome 17"/>
</dbReference>
<dbReference type="RNAct" id="P10827">
    <property type="molecule type" value="protein"/>
</dbReference>
<dbReference type="Bgee" id="ENSG00000126351">
    <property type="expression patterns" value="Expressed in nucleus accumbens and 204 other cell types or tissues"/>
</dbReference>
<dbReference type="ExpressionAtlas" id="P10827">
    <property type="expression patterns" value="baseline and differential"/>
</dbReference>
<dbReference type="GO" id="GO:0000785">
    <property type="term" value="C:chromatin"/>
    <property type="evidence" value="ECO:0000247"/>
    <property type="project" value="NTNU_SB"/>
</dbReference>
<dbReference type="GO" id="GO:0005829">
    <property type="term" value="C:cytosol"/>
    <property type="evidence" value="ECO:0000314"/>
    <property type="project" value="UniProtKB"/>
</dbReference>
<dbReference type="GO" id="GO:0005654">
    <property type="term" value="C:nucleoplasm"/>
    <property type="evidence" value="ECO:0000304"/>
    <property type="project" value="Reactome"/>
</dbReference>
<dbReference type="GO" id="GO:0005634">
    <property type="term" value="C:nucleus"/>
    <property type="evidence" value="ECO:0000314"/>
    <property type="project" value="UniProtKB"/>
</dbReference>
<dbReference type="GO" id="GO:0090575">
    <property type="term" value="C:RNA polymerase II transcription regulator complex"/>
    <property type="evidence" value="ECO:0000269"/>
    <property type="project" value="ComplexPortal"/>
</dbReference>
<dbReference type="GO" id="GO:0031490">
    <property type="term" value="F:chromatin DNA binding"/>
    <property type="evidence" value="ECO:0007669"/>
    <property type="project" value="Ensembl"/>
</dbReference>
<dbReference type="GO" id="GO:0003700">
    <property type="term" value="F:DNA-binding transcription factor activity"/>
    <property type="evidence" value="ECO:0000314"/>
    <property type="project" value="UniProtKB"/>
</dbReference>
<dbReference type="GO" id="GO:0000981">
    <property type="term" value="F:DNA-binding transcription factor activity, RNA polymerase II-specific"/>
    <property type="evidence" value="ECO:0000247"/>
    <property type="project" value="NTNU_SB"/>
</dbReference>
<dbReference type="GO" id="GO:0140296">
    <property type="term" value="F:general transcription initiation factor binding"/>
    <property type="evidence" value="ECO:0000353"/>
    <property type="project" value="UniProtKB"/>
</dbReference>
<dbReference type="GO" id="GO:0004879">
    <property type="term" value="F:nuclear receptor activity"/>
    <property type="evidence" value="ECO:0000314"/>
    <property type="project" value="UniProtKB"/>
</dbReference>
<dbReference type="GO" id="GO:0019904">
    <property type="term" value="F:protein domain specific binding"/>
    <property type="evidence" value="ECO:0000353"/>
    <property type="project" value="UniProtKB"/>
</dbReference>
<dbReference type="GO" id="GO:0044877">
    <property type="term" value="F:protein-containing complex binding"/>
    <property type="evidence" value="ECO:0007669"/>
    <property type="project" value="Ensembl"/>
</dbReference>
<dbReference type="GO" id="GO:0000978">
    <property type="term" value="F:RNA polymerase II cis-regulatory region sequence-specific DNA binding"/>
    <property type="evidence" value="ECO:0000318"/>
    <property type="project" value="GO_Central"/>
</dbReference>
<dbReference type="GO" id="GO:0017025">
    <property type="term" value="F:TBP-class protein binding"/>
    <property type="evidence" value="ECO:0000314"/>
    <property type="project" value="UniProtKB"/>
</dbReference>
<dbReference type="GO" id="GO:0070324">
    <property type="term" value="F:thyroid hormone binding"/>
    <property type="evidence" value="ECO:0000314"/>
    <property type="project" value="UniProtKB"/>
</dbReference>
<dbReference type="GO" id="GO:0000976">
    <property type="term" value="F:transcription cis-regulatory region binding"/>
    <property type="evidence" value="ECO:0000314"/>
    <property type="project" value="BHF-UCL"/>
</dbReference>
<dbReference type="GO" id="GO:0008270">
    <property type="term" value="F:zinc ion binding"/>
    <property type="evidence" value="ECO:0007669"/>
    <property type="project" value="UniProtKB-KW"/>
</dbReference>
<dbReference type="GO" id="GO:0001502">
    <property type="term" value="P:cartilage condensation"/>
    <property type="evidence" value="ECO:0007669"/>
    <property type="project" value="Ensembl"/>
</dbReference>
<dbReference type="GO" id="GO:0030154">
    <property type="term" value="P:cell differentiation"/>
    <property type="evidence" value="ECO:0000318"/>
    <property type="project" value="GO_Central"/>
</dbReference>
<dbReference type="GO" id="GO:0030218">
    <property type="term" value="P:erythrocyte differentiation"/>
    <property type="evidence" value="ECO:0007669"/>
    <property type="project" value="Ensembl"/>
</dbReference>
<dbReference type="GO" id="GO:0008050">
    <property type="term" value="P:female courtship behavior"/>
    <property type="evidence" value="ECO:0007669"/>
    <property type="project" value="Ensembl"/>
</dbReference>
<dbReference type="GO" id="GO:0009755">
    <property type="term" value="P:hormone-mediated signaling pathway"/>
    <property type="evidence" value="ECO:0000314"/>
    <property type="project" value="BHF-UCL"/>
</dbReference>
<dbReference type="GO" id="GO:0007611">
    <property type="term" value="P:learning or memory"/>
    <property type="evidence" value="ECO:0007669"/>
    <property type="project" value="Ensembl"/>
</dbReference>
<dbReference type="GO" id="GO:0042789">
    <property type="term" value="P:mRNA transcription by RNA polymerase II"/>
    <property type="evidence" value="ECO:0000314"/>
    <property type="project" value="ComplexPortal"/>
</dbReference>
<dbReference type="GO" id="GO:0045892">
    <property type="term" value="P:negative regulation of DNA-templated transcription"/>
    <property type="evidence" value="ECO:0000314"/>
    <property type="project" value="UniProtKB"/>
</dbReference>
<dbReference type="GO" id="GO:2000143">
    <property type="term" value="P:negative regulation of DNA-templated transcription initiation"/>
    <property type="evidence" value="ECO:0000314"/>
    <property type="project" value="UniProtKB"/>
</dbReference>
<dbReference type="GO" id="GO:0017055">
    <property type="term" value="P:negative regulation of RNA polymerase II transcription preinitiation complex assembly"/>
    <property type="evidence" value="ECO:0000314"/>
    <property type="project" value="UniProtKB"/>
</dbReference>
<dbReference type="GO" id="GO:0000122">
    <property type="term" value="P:negative regulation of transcription by RNA polymerase II"/>
    <property type="evidence" value="ECO:0000318"/>
    <property type="project" value="GO_Central"/>
</dbReference>
<dbReference type="GO" id="GO:0001503">
    <property type="term" value="P:ossification"/>
    <property type="evidence" value="ECO:0007669"/>
    <property type="project" value="Ensembl"/>
</dbReference>
<dbReference type="GO" id="GO:0120162">
    <property type="term" value="P:positive regulation of cold-induced thermogenesis"/>
    <property type="evidence" value="ECO:0000250"/>
    <property type="project" value="YuBioLab"/>
</dbReference>
<dbReference type="GO" id="GO:0045925">
    <property type="term" value="P:positive regulation of female receptivity"/>
    <property type="evidence" value="ECO:0007669"/>
    <property type="project" value="Ensembl"/>
</dbReference>
<dbReference type="GO" id="GO:0002157">
    <property type="term" value="P:positive regulation of thyroid hormone receptor signaling pathway"/>
    <property type="evidence" value="ECO:0000314"/>
    <property type="project" value="ComplexPortal"/>
</dbReference>
<dbReference type="GO" id="GO:0045944">
    <property type="term" value="P:positive regulation of transcription by RNA polymerase II"/>
    <property type="evidence" value="ECO:0000314"/>
    <property type="project" value="ComplexPortal"/>
</dbReference>
<dbReference type="GO" id="GO:0008016">
    <property type="term" value="P:regulation of heart contraction"/>
    <property type="evidence" value="ECO:0007669"/>
    <property type="project" value="Ensembl"/>
</dbReference>
<dbReference type="GO" id="GO:0050994">
    <property type="term" value="P:regulation of lipid catabolic process"/>
    <property type="evidence" value="ECO:0007669"/>
    <property type="project" value="Ensembl"/>
</dbReference>
<dbReference type="GO" id="GO:0033032">
    <property type="term" value="P:regulation of myeloid cell apoptotic process"/>
    <property type="evidence" value="ECO:0007669"/>
    <property type="project" value="Ensembl"/>
</dbReference>
<dbReference type="GO" id="GO:0002155">
    <property type="term" value="P:regulation of thyroid hormone receptor signaling pathway"/>
    <property type="evidence" value="ECO:0007669"/>
    <property type="project" value="Ensembl"/>
</dbReference>
<dbReference type="GO" id="GO:0006357">
    <property type="term" value="P:regulation of transcription by RNA polymerase II"/>
    <property type="evidence" value="ECO:0000314"/>
    <property type="project" value="BHF-UCL"/>
</dbReference>
<dbReference type="GO" id="GO:0009409">
    <property type="term" value="P:response to cold"/>
    <property type="evidence" value="ECO:0007669"/>
    <property type="project" value="Ensembl"/>
</dbReference>
<dbReference type="GO" id="GO:0048384">
    <property type="term" value="P:retinoic acid receptor signaling pathway"/>
    <property type="evidence" value="ECO:0000318"/>
    <property type="project" value="GO_Central"/>
</dbReference>
<dbReference type="GO" id="GO:0030878">
    <property type="term" value="P:thyroid gland development"/>
    <property type="evidence" value="ECO:0007669"/>
    <property type="project" value="Ensembl"/>
</dbReference>
<dbReference type="GO" id="GO:0002154">
    <property type="term" value="P:thyroid hormone receptor signaling pathway"/>
    <property type="evidence" value="ECO:0000318"/>
    <property type="project" value="GO_Central"/>
</dbReference>
<dbReference type="GO" id="GO:0006366">
    <property type="term" value="P:transcription by RNA polymerase II"/>
    <property type="evidence" value="ECO:0000314"/>
    <property type="project" value="UniProtKB"/>
</dbReference>
<dbReference type="GO" id="GO:0060509">
    <property type="term" value="P:type I pneumocyte differentiation"/>
    <property type="evidence" value="ECO:0007669"/>
    <property type="project" value="Ensembl"/>
</dbReference>
<dbReference type="CDD" id="cd06961">
    <property type="entry name" value="NR_DBD_TR"/>
    <property type="match status" value="1"/>
</dbReference>
<dbReference type="CDD" id="cd06935">
    <property type="entry name" value="NR_LBD_TR"/>
    <property type="match status" value="1"/>
</dbReference>
<dbReference type="FunFam" id="1.10.565.10:FF:000006">
    <property type="entry name" value="Thyroid hormone receptor beta 2"/>
    <property type="match status" value="1"/>
</dbReference>
<dbReference type="FunFam" id="3.30.50.10:FF:000011">
    <property type="entry name" value="Thyroid hormone receptor beta isoform"/>
    <property type="match status" value="1"/>
</dbReference>
<dbReference type="Gene3D" id="3.30.50.10">
    <property type="entry name" value="Erythroid Transcription Factor GATA-1, subunit A"/>
    <property type="match status" value="1"/>
</dbReference>
<dbReference type="Gene3D" id="1.10.565.10">
    <property type="entry name" value="Retinoid X Receptor"/>
    <property type="match status" value="1"/>
</dbReference>
<dbReference type="InterPro" id="IPR035500">
    <property type="entry name" value="NHR-like_dom_sf"/>
</dbReference>
<dbReference type="InterPro" id="IPR000536">
    <property type="entry name" value="Nucl_hrmn_rcpt_lig-bd"/>
</dbReference>
<dbReference type="InterPro" id="IPR050234">
    <property type="entry name" value="Nuclear_hormone_rcpt_NR1"/>
</dbReference>
<dbReference type="InterPro" id="IPR001723">
    <property type="entry name" value="Nuclear_hrmn_rcpt"/>
</dbReference>
<dbReference type="InterPro" id="IPR001728">
    <property type="entry name" value="ThyrH_rcpt"/>
</dbReference>
<dbReference type="InterPro" id="IPR001628">
    <property type="entry name" value="Znf_hrmn_rcpt"/>
</dbReference>
<dbReference type="InterPro" id="IPR013088">
    <property type="entry name" value="Znf_NHR/GATA"/>
</dbReference>
<dbReference type="PANTHER" id="PTHR24082">
    <property type="entry name" value="NUCLEAR HORMONE RECEPTOR"/>
    <property type="match status" value="1"/>
</dbReference>
<dbReference type="PANTHER" id="PTHR24082:SF42">
    <property type="entry name" value="THYROID HORMONE RECEPTOR ALPHA"/>
    <property type="match status" value="1"/>
</dbReference>
<dbReference type="Pfam" id="PF00104">
    <property type="entry name" value="Hormone_recep"/>
    <property type="match status" value="1"/>
</dbReference>
<dbReference type="Pfam" id="PF00105">
    <property type="entry name" value="zf-C4"/>
    <property type="match status" value="1"/>
</dbReference>
<dbReference type="PRINTS" id="PR00398">
    <property type="entry name" value="STRDHORMONER"/>
</dbReference>
<dbReference type="PRINTS" id="PR00047">
    <property type="entry name" value="STROIDFINGER"/>
</dbReference>
<dbReference type="PRINTS" id="PR00546">
    <property type="entry name" value="THYROIDHORMR"/>
</dbReference>
<dbReference type="SMART" id="SM00430">
    <property type="entry name" value="HOLI"/>
    <property type="match status" value="1"/>
</dbReference>
<dbReference type="SMART" id="SM00399">
    <property type="entry name" value="ZnF_C4"/>
    <property type="match status" value="1"/>
</dbReference>
<dbReference type="SUPFAM" id="SSF57716">
    <property type="entry name" value="Glucocorticoid receptor-like (DNA-binding domain)"/>
    <property type="match status" value="1"/>
</dbReference>
<dbReference type="SUPFAM" id="SSF48508">
    <property type="entry name" value="Nuclear receptor ligand-binding domain"/>
    <property type="match status" value="1"/>
</dbReference>
<dbReference type="PROSITE" id="PS51843">
    <property type="entry name" value="NR_LBD"/>
    <property type="match status" value="1"/>
</dbReference>
<dbReference type="PROSITE" id="PS00031">
    <property type="entry name" value="NUCLEAR_REC_DBD_1"/>
    <property type="match status" value="1"/>
</dbReference>
<dbReference type="PROSITE" id="PS51030">
    <property type="entry name" value="NUCLEAR_REC_DBD_2"/>
    <property type="match status" value="1"/>
</dbReference>
<sequence length="490" mass="54816">MEQKPSKVECGSDPEENSARSPDGKRKRKNGQCSLKTSMSGYIPSYLDKDEQCVVCGDKATGYHYRCITCEGCKGFFRRTIQKNLHPTYSCKYDSCCVIDKITRNQCQLCRFKKCIAVGMAMDLVLDDSKRVAKRKLIEQNRERRRKEEMIRSLQQRPEPTPEEWDLIHIATEAHRSTNAQGSHWKQRRKFLPDDIGQSPIVSMPDGDKVDLEAFSEFTKIITPAITRVVDFAKKLPMFSELPCEDQIILLKGCCMEIMSLRAAVRYDPESDTLTLSGEMAVKREQLKNGGLGVVSDAIFELGKSLSAFNLDDTEVALLQAVLLMSTDRSGLLCVDKIEKSQEAYLLAFEHYVNHRKHNIPHFWPKLLMKEREVQSSILYKGAAAEGRPGGSLGVHPEGQQLLGMHVVQGPQVRQLEQQLGEAGSLQGPVLQHQSPKSPQQRLLELLHRSGILHARAVCGEDDSSEADSPSSSEEEPEVCEDLAGNAASP</sequence>
<accession>P10827</accession>
<accession>A8K3B5</accession>
<accession>P21205</accession>
<accession>Q8N6A1</accession>
<accession>Q96H73</accession>
<comment type="function">
    <molecule>Isoform Alpha-1</molecule>
    <text evidence="7 8 11 12">Nuclear hormone receptor that can act as a repressor or activator of transcription. High affinity receptor for thyroid hormones, including triiodothyronine and thyroxine.</text>
</comment>
<comment type="function">
    <molecule>Isoform Alpha-2</molecule>
    <text evidence="18">Does not bind thyroid hormone and functions as a weak dominant negative inhibitor of thyroid hormone action.</text>
</comment>
<comment type="subunit">
    <text evidence="6 7 9 10 11 12 13 19 20">Binds DNA as a dimer; homodimer and heterodimer with RXRB. Interacts with NCOA3 and NCOA6 coactivators, leading to a strong increase of transcription of target genes. Probably interacts with SFPQ. Interacts with C1D. Interacts with AKAP13. Interacts with TP53INP2. Interacts with PER2. Isoform alpha-2 and isoform alpha-1 interact with TACC1, but the interaction with alpha-1 is weaker. The interaction with isoform alpha-1, but not alpha-2, is decreased in the presence of thyroid hormone T3 (PubMed:20078863).</text>
</comment>
<comment type="interaction">
    <interactant intactId="EBI-286285">
        <id>P10827</id>
    </interactant>
    <interactant intactId="EBI-746752">
        <id>Q9Y2J4</id>
        <label>AMOTL2</label>
    </interactant>
    <organismsDiffer>false</organismsDiffer>
    <experiments>3</experiments>
</comment>
<comment type="interaction">
    <interactant intactId="EBI-286285">
        <id>P10827</id>
    </interactant>
    <interactant intactId="EBI-10187270">
        <id>Q9Y2J4-4</id>
        <label>AMOTL2</label>
    </interactant>
    <organismsDiffer>false</organismsDiffer>
    <experiments>3</experiments>
</comment>
<comment type="interaction">
    <interactant intactId="EBI-286285">
        <id>P10827</id>
    </interactant>
    <interactant intactId="EBI-4314390">
        <id>O95971</id>
        <label>CD160</label>
    </interactant>
    <organismsDiffer>false</organismsDiffer>
    <experiments>3</experiments>
</comment>
<comment type="interaction">
    <interactant intactId="EBI-286285">
        <id>P10827</id>
    </interactant>
    <interactant intactId="EBI-742887">
        <id>Q8TAP6</id>
        <label>CEP76</label>
    </interactant>
    <organismsDiffer>false</organismsDiffer>
    <experiments>4</experiments>
</comment>
<comment type="interaction">
    <interactant intactId="EBI-286285">
        <id>P10827</id>
    </interactant>
    <interactant intactId="EBI-2686809">
        <id>Q96JM7</id>
        <label>L3MBTL3</label>
    </interactant>
    <organismsDiffer>false</organismsDiffer>
    <experiments>3</experiments>
</comment>
<comment type="interaction">
    <interactant intactId="EBI-286285">
        <id>P10827</id>
    </interactant>
    <interactant intactId="EBI-394459">
        <id>Q15648</id>
        <label>MED1</label>
    </interactant>
    <organismsDiffer>false</organismsDiffer>
    <experiments>4</experiments>
</comment>
<comment type="interaction">
    <interactant intactId="EBI-286285">
        <id>P10827</id>
    </interactant>
    <interactant intactId="EBI-16439278">
        <id>Q6FHY5</id>
        <label>MEOX2</label>
    </interactant>
    <organismsDiffer>false</organismsDiffer>
    <experiments>3</experiments>
</comment>
<comment type="interaction">
    <interactant intactId="EBI-286285">
        <id>P10827</id>
    </interactant>
    <interactant intactId="EBI-2805516">
        <id>P31321</id>
        <label>PRKAR1B</label>
    </interactant>
    <organismsDiffer>false</organismsDiffer>
    <experiments>5</experiments>
</comment>
<comment type="interaction">
    <interactant intactId="EBI-286285">
        <id>P10827</id>
    </interactant>
    <interactant intactId="EBI-10770179">
        <id>Q96A49</id>
        <label>SYAP1</label>
    </interactant>
    <organismsDiffer>false</organismsDiffer>
    <experiments>5</experiments>
</comment>
<comment type="interaction">
    <interactant intactId="EBI-286285">
        <id>P10827</id>
    </interactant>
    <interactant intactId="EBI-12007872">
        <id>O75410-7</id>
        <label>TACC1</label>
    </interactant>
    <organismsDiffer>false</organismsDiffer>
    <experiments>3</experiments>
</comment>
<comment type="interaction">
    <interactant intactId="EBI-286285">
        <id>P10827</id>
    </interactant>
    <interactant intactId="EBI-286271">
        <id>Q9JLI4</id>
        <label>Ncoa6</label>
    </interactant>
    <organismsDiffer>true</organismsDiffer>
    <experiments>2</experiments>
</comment>
<comment type="subcellular location">
    <subcellularLocation>
        <location>Nucleus</location>
    </subcellularLocation>
</comment>
<comment type="subcellular location">
    <molecule>Isoform Alpha-2</molecule>
    <subcellularLocation>
        <location evidence="2">Cytoplasm</location>
    </subcellularLocation>
    <subcellularLocation>
        <location evidence="2">Nucleus</location>
    </subcellularLocation>
    <text evidence="2">When overexpressed found in the cytoplasm where it colocalizes with TACC1.</text>
</comment>
<comment type="alternative products">
    <event type="alternative splicing"/>
    <isoform>
        <id>P10827-1</id>
        <name>Alpha-2</name>
        <sequence type="displayed"/>
    </isoform>
    <isoform>
        <id>P10827-2</id>
        <name>Alpha-1</name>
        <sequence type="described" ref="VSP_003621"/>
    </isoform>
    <isoform>
        <id>P10827-3</id>
        <name>Alpha-3</name>
        <sequence type="described" ref="VSP_003622"/>
    </isoform>
    <isoform>
        <id>P10827-4</id>
        <name>Alpha-4</name>
        <name>Alpha3</name>
        <sequence type="described" ref="VSP_003623"/>
    </isoform>
</comment>
<comment type="domain">
    <text>Composed of three domains: a modulating N-terminal domain, a DNA-binding domain and a C-terminal ligand-binding domain.</text>
</comment>
<comment type="disease" evidence="14 15 16 17">
    <disease id="DI-03343">
        <name>Hypothyroidism, congenital, non-goitrous, 6</name>
        <acronym>CHNG6</acronym>
        <description>A disease characterized by growth retardation, developmental retardation, skeletal dysplasia, borderline low thyroxine levels and high triiodothyronine levels. There is differential sensitivity to thyroid hormone action, with retention of hormone responsiveness in the hypothalamic pituitary axis and liver but skeletal, gastrointestinal, and myocardial resistance.</description>
        <dbReference type="MIM" id="614450"/>
    </disease>
    <text>The disease is caused by variants affecting the gene represented in this entry.</text>
</comment>
<comment type="miscellaneous">
    <molecule>Isoform Alpha-2</molecule>
    <text evidence="26">Does not bind thyroid hormone T3.</text>
</comment>
<comment type="similarity">
    <text evidence="25">Belongs to the nuclear hormone receptor family. NR1 subfamily.</text>
</comment>
<protein>
    <recommendedName>
        <fullName>Thyroid hormone receptor alpha</fullName>
    </recommendedName>
    <alternativeName>
        <fullName>Nuclear receptor subfamily 1 group A member 1</fullName>
    </alternativeName>
    <alternativeName>
        <fullName>V-erbA-related protein 7</fullName>
        <shortName>EAR-7</shortName>
    </alternativeName>
    <alternativeName>
        <fullName>c-erbA-1</fullName>
    </alternativeName>
    <alternativeName>
        <fullName>c-erbA-alpha</fullName>
    </alternativeName>
</protein>